<gene>
    <name evidence="1" type="primary">accD</name>
    <name type="ordered locus">PST_1780</name>
</gene>
<evidence type="ECO:0000255" key="1">
    <source>
        <dbReference type="HAMAP-Rule" id="MF_01395"/>
    </source>
</evidence>
<evidence type="ECO:0000255" key="2">
    <source>
        <dbReference type="PROSITE-ProRule" id="PRU01136"/>
    </source>
</evidence>
<comment type="function">
    <text evidence="1">Component of the acetyl coenzyme A carboxylase (ACC) complex. Biotin carboxylase (BC) catalyzes the carboxylation of biotin on its carrier protein (BCCP) and then the CO(2) group is transferred by the transcarboxylase to acetyl-CoA to form malonyl-CoA.</text>
</comment>
<comment type="catalytic activity">
    <reaction evidence="1">
        <text>N(6)-carboxybiotinyl-L-lysyl-[protein] + acetyl-CoA = N(6)-biotinyl-L-lysyl-[protein] + malonyl-CoA</text>
        <dbReference type="Rhea" id="RHEA:54728"/>
        <dbReference type="Rhea" id="RHEA-COMP:10505"/>
        <dbReference type="Rhea" id="RHEA-COMP:10506"/>
        <dbReference type="ChEBI" id="CHEBI:57288"/>
        <dbReference type="ChEBI" id="CHEBI:57384"/>
        <dbReference type="ChEBI" id="CHEBI:83144"/>
        <dbReference type="ChEBI" id="CHEBI:83145"/>
        <dbReference type="EC" id="2.1.3.15"/>
    </reaction>
</comment>
<comment type="cofactor">
    <cofactor evidence="1">
        <name>Zn(2+)</name>
        <dbReference type="ChEBI" id="CHEBI:29105"/>
    </cofactor>
    <text evidence="1">Binds 1 zinc ion per subunit.</text>
</comment>
<comment type="pathway">
    <text evidence="1">Lipid metabolism; malonyl-CoA biosynthesis; malonyl-CoA from acetyl-CoA: step 1/1.</text>
</comment>
<comment type="subunit">
    <text evidence="1">Acetyl-CoA carboxylase is a heterohexamer composed of biotin carboxyl carrier protein (AccB), biotin carboxylase (AccC) and two subunits each of ACCase subunit alpha (AccA) and ACCase subunit beta (AccD).</text>
</comment>
<comment type="subcellular location">
    <subcellularLocation>
        <location evidence="1">Cytoplasm</location>
    </subcellularLocation>
</comment>
<comment type="similarity">
    <text evidence="1">Belongs to the AccD/PCCB family.</text>
</comment>
<feature type="chain" id="PRO_0000359044" description="Acetyl-coenzyme A carboxylase carboxyl transferase subunit beta">
    <location>
        <begin position="1"/>
        <end position="297"/>
    </location>
</feature>
<feature type="domain" description="CoA carboxyltransferase N-terminal" evidence="2">
    <location>
        <begin position="27"/>
        <end position="296"/>
    </location>
</feature>
<feature type="zinc finger region" description="C4-type" evidence="1">
    <location>
        <begin position="31"/>
        <end position="53"/>
    </location>
</feature>
<feature type="binding site" evidence="1">
    <location>
        <position position="31"/>
    </location>
    <ligand>
        <name>Zn(2+)</name>
        <dbReference type="ChEBI" id="CHEBI:29105"/>
    </ligand>
</feature>
<feature type="binding site" evidence="1">
    <location>
        <position position="34"/>
    </location>
    <ligand>
        <name>Zn(2+)</name>
        <dbReference type="ChEBI" id="CHEBI:29105"/>
    </ligand>
</feature>
<feature type="binding site" evidence="1">
    <location>
        <position position="50"/>
    </location>
    <ligand>
        <name>Zn(2+)</name>
        <dbReference type="ChEBI" id="CHEBI:29105"/>
    </ligand>
</feature>
<feature type="binding site" evidence="1">
    <location>
        <position position="53"/>
    </location>
    <ligand>
        <name>Zn(2+)</name>
        <dbReference type="ChEBI" id="CHEBI:29105"/>
    </ligand>
</feature>
<reference key="1">
    <citation type="journal article" date="2008" name="Proc. Natl. Acad. Sci. U.S.A.">
        <title>Nitrogen fixation island and rhizosphere competence traits in the genome of root-associated Pseudomonas stutzeri A1501.</title>
        <authorList>
            <person name="Yan Y."/>
            <person name="Yang J."/>
            <person name="Dou Y."/>
            <person name="Chen M."/>
            <person name="Ping S."/>
            <person name="Peng J."/>
            <person name="Lu W."/>
            <person name="Zhang W."/>
            <person name="Yao Z."/>
            <person name="Li H."/>
            <person name="Liu W."/>
            <person name="He S."/>
            <person name="Geng L."/>
            <person name="Zhang X."/>
            <person name="Yang F."/>
            <person name="Yu H."/>
            <person name="Zhan Y."/>
            <person name="Li D."/>
            <person name="Lin Z."/>
            <person name="Wang Y."/>
            <person name="Elmerich C."/>
            <person name="Lin M."/>
            <person name="Jin Q."/>
        </authorList>
    </citation>
    <scope>NUCLEOTIDE SEQUENCE [LARGE SCALE GENOMIC DNA]</scope>
    <source>
        <strain>A1501</strain>
    </source>
</reference>
<dbReference type="EC" id="2.1.3.15" evidence="1"/>
<dbReference type="EMBL" id="CP000304">
    <property type="protein sequence ID" value="ABP79456.1"/>
    <property type="molecule type" value="Genomic_DNA"/>
</dbReference>
<dbReference type="RefSeq" id="WP_011912933.1">
    <property type="nucleotide sequence ID" value="NC_009434.1"/>
</dbReference>
<dbReference type="SMR" id="A4VKF5"/>
<dbReference type="KEGG" id="psa:PST_1780"/>
<dbReference type="eggNOG" id="COG0777">
    <property type="taxonomic scope" value="Bacteria"/>
</dbReference>
<dbReference type="HOGENOM" id="CLU_015486_1_0_6"/>
<dbReference type="UniPathway" id="UPA00655">
    <property type="reaction ID" value="UER00711"/>
</dbReference>
<dbReference type="Proteomes" id="UP000000233">
    <property type="component" value="Chromosome"/>
</dbReference>
<dbReference type="GO" id="GO:0009329">
    <property type="term" value="C:acetate CoA-transferase complex"/>
    <property type="evidence" value="ECO:0007669"/>
    <property type="project" value="TreeGrafter"/>
</dbReference>
<dbReference type="GO" id="GO:0003989">
    <property type="term" value="F:acetyl-CoA carboxylase activity"/>
    <property type="evidence" value="ECO:0007669"/>
    <property type="project" value="InterPro"/>
</dbReference>
<dbReference type="GO" id="GO:0005524">
    <property type="term" value="F:ATP binding"/>
    <property type="evidence" value="ECO:0007669"/>
    <property type="project" value="UniProtKB-KW"/>
</dbReference>
<dbReference type="GO" id="GO:0016743">
    <property type="term" value="F:carboxyl- or carbamoyltransferase activity"/>
    <property type="evidence" value="ECO:0007669"/>
    <property type="project" value="UniProtKB-UniRule"/>
</dbReference>
<dbReference type="GO" id="GO:0008270">
    <property type="term" value="F:zinc ion binding"/>
    <property type="evidence" value="ECO:0007669"/>
    <property type="project" value="UniProtKB-UniRule"/>
</dbReference>
<dbReference type="GO" id="GO:0006633">
    <property type="term" value="P:fatty acid biosynthetic process"/>
    <property type="evidence" value="ECO:0007669"/>
    <property type="project" value="UniProtKB-KW"/>
</dbReference>
<dbReference type="GO" id="GO:2001295">
    <property type="term" value="P:malonyl-CoA biosynthetic process"/>
    <property type="evidence" value="ECO:0007669"/>
    <property type="project" value="UniProtKB-UniRule"/>
</dbReference>
<dbReference type="Gene3D" id="3.90.226.10">
    <property type="entry name" value="2-enoyl-CoA Hydratase, Chain A, domain 1"/>
    <property type="match status" value="1"/>
</dbReference>
<dbReference type="HAMAP" id="MF_01395">
    <property type="entry name" value="AcetylCoA_CT_beta"/>
    <property type="match status" value="1"/>
</dbReference>
<dbReference type="InterPro" id="IPR034733">
    <property type="entry name" value="AcCoA_carboxyl_beta"/>
</dbReference>
<dbReference type="InterPro" id="IPR000438">
    <property type="entry name" value="Acetyl_CoA_COase_Trfase_b_su"/>
</dbReference>
<dbReference type="InterPro" id="IPR029045">
    <property type="entry name" value="ClpP/crotonase-like_dom_sf"/>
</dbReference>
<dbReference type="InterPro" id="IPR011762">
    <property type="entry name" value="COA_CT_N"/>
</dbReference>
<dbReference type="InterPro" id="IPR041010">
    <property type="entry name" value="Znf-ACC"/>
</dbReference>
<dbReference type="NCBIfam" id="TIGR00515">
    <property type="entry name" value="accD"/>
    <property type="match status" value="1"/>
</dbReference>
<dbReference type="PANTHER" id="PTHR42995">
    <property type="entry name" value="ACETYL-COENZYME A CARBOXYLASE CARBOXYL TRANSFERASE SUBUNIT BETA, CHLOROPLASTIC"/>
    <property type="match status" value="1"/>
</dbReference>
<dbReference type="PANTHER" id="PTHR42995:SF5">
    <property type="entry name" value="ACETYL-COENZYME A CARBOXYLASE CARBOXYL TRANSFERASE SUBUNIT BETA, CHLOROPLASTIC"/>
    <property type="match status" value="1"/>
</dbReference>
<dbReference type="Pfam" id="PF01039">
    <property type="entry name" value="Carboxyl_trans"/>
    <property type="match status" value="1"/>
</dbReference>
<dbReference type="Pfam" id="PF17848">
    <property type="entry name" value="Zn_ribbon_ACC"/>
    <property type="match status" value="1"/>
</dbReference>
<dbReference type="PRINTS" id="PR01070">
    <property type="entry name" value="ACCCTRFRASEB"/>
</dbReference>
<dbReference type="SUPFAM" id="SSF52096">
    <property type="entry name" value="ClpP/crotonase"/>
    <property type="match status" value="1"/>
</dbReference>
<dbReference type="PROSITE" id="PS50980">
    <property type="entry name" value="COA_CT_NTER"/>
    <property type="match status" value="1"/>
</dbReference>
<keyword id="KW-0067">ATP-binding</keyword>
<keyword id="KW-0963">Cytoplasm</keyword>
<keyword id="KW-0275">Fatty acid biosynthesis</keyword>
<keyword id="KW-0276">Fatty acid metabolism</keyword>
<keyword id="KW-0444">Lipid biosynthesis</keyword>
<keyword id="KW-0443">Lipid metabolism</keyword>
<keyword id="KW-0479">Metal-binding</keyword>
<keyword id="KW-0547">Nucleotide-binding</keyword>
<keyword id="KW-1185">Reference proteome</keyword>
<keyword id="KW-0808">Transferase</keyword>
<keyword id="KW-0862">Zinc</keyword>
<keyword id="KW-0863">Zinc-finger</keyword>
<sequence length="297" mass="32736">MSNWLVDKLIPSIMRSETQKSSVPEGLWHKCPSCEAVLYRPELEKTLDVCPKCHHHMRIDARTRLDIFLDADGREEIAAELEPVDRLKFRDSKKYKDRLSAAQKQTGEKDALIAMSGKVLNVPVVACAFEFSFMGGSMGAIVGERFVRAANVALEKRCPLVCFSASGGARMQEALISLMQMAKTSAVLARMREEGLPFISVLTDPVYGGVSASLAMLGDVIVAEPKALIGFAGPRVIEQTVREKLPEGFQRSEFLLEHGAIDLIIPRAELRSRLARLLAQMQKLPTPVETSQVTAKA</sequence>
<accession>A4VKF5</accession>
<organism>
    <name type="scientific">Stutzerimonas stutzeri (strain A1501)</name>
    <name type="common">Pseudomonas stutzeri</name>
    <dbReference type="NCBI Taxonomy" id="379731"/>
    <lineage>
        <taxon>Bacteria</taxon>
        <taxon>Pseudomonadati</taxon>
        <taxon>Pseudomonadota</taxon>
        <taxon>Gammaproteobacteria</taxon>
        <taxon>Pseudomonadales</taxon>
        <taxon>Pseudomonadaceae</taxon>
        <taxon>Stutzerimonas</taxon>
    </lineage>
</organism>
<proteinExistence type="inferred from homology"/>
<protein>
    <recommendedName>
        <fullName evidence="1">Acetyl-coenzyme A carboxylase carboxyl transferase subunit beta</fullName>
        <shortName evidence="1">ACCase subunit beta</shortName>
        <shortName evidence="1">Acetyl-CoA carboxylase carboxyltransferase subunit beta</shortName>
        <ecNumber evidence="1">2.1.3.15</ecNumber>
    </recommendedName>
</protein>
<name>ACCD_STUS1</name>